<organism>
    <name type="scientific">Canis lupus familiaris</name>
    <name type="common">Dog</name>
    <name type="synonym">Canis familiaris</name>
    <dbReference type="NCBI Taxonomy" id="9615"/>
    <lineage>
        <taxon>Eukaryota</taxon>
        <taxon>Metazoa</taxon>
        <taxon>Chordata</taxon>
        <taxon>Craniata</taxon>
        <taxon>Vertebrata</taxon>
        <taxon>Euteleostomi</taxon>
        <taxon>Mammalia</taxon>
        <taxon>Eutheria</taxon>
        <taxon>Laurasiatheria</taxon>
        <taxon>Carnivora</taxon>
        <taxon>Caniformia</taxon>
        <taxon>Canidae</taxon>
        <taxon>Canis</taxon>
    </lineage>
</organism>
<accession>Q8SPS9</accession>
<reference key="1">
    <citation type="journal article" date="2003" name="Gene">
        <title>Comparative analysis, gene organization and expression of canine TCTE1L.</title>
        <authorList>
            <person name="Li K."/>
            <person name="Zhang Q."/>
            <person name="Johnson J.L."/>
            <person name="Aguirre G.D."/>
        </authorList>
    </citation>
    <scope>NUCLEOTIDE SEQUENCE [MRNA]</scope>
</reference>
<sequence length="116" mass="13081">MEEYHRHCDEVGFNADEAHNIVKECIDGVLGGEDYNQNNINQWTASIVEQSLTHLVKLGKAYKYIVTCAVVQRSAYGFHTASSCFWDTTSDGTCTVRWENRTMNCIVNVFAIAIVL</sequence>
<dbReference type="EMBL" id="AF491301">
    <property type="protein sequence ID" value="AAM09697.1"/>
    <property type="molecule type" value="mRNA"/>
</dbReference>
<dbReference type="RefSeq" id="NP_001003001.1">
    <property type="nucleotide sequence ID" value="NM_001003001.1"/>
</dbReference>
<dbReference type="SMR" id="Q8SPS9"/>
<dbReference type="FunCoup" id="Q8SPS9">
    <property type="interactions" value="900"/>
</dbReference>
<dbReference type="STRING" id="9615.ENSCAFP00000020551"/>
<dbReference type="PaxDb" id="9612-ENSCAFP00000020551"/>
<dbReference type="GeneID" id="403505"/>
<dbReference type="KEGG" id="cfa:403505"/>
<dbReference type="CTD" id="6990"/>
<dbReference type="eggNOG" id="KOG4081">
    <property type="taxonomic scope" value="Eukaryota"/>
</dbReference>
<dbReference type="InParanoid" id="Q8SPS9"/>
<dbReference type="OrthoDB" id="10059120at2759"/>
<dbReference type="Proteomes" id="UP000002254">
    <property type="component" value="Unplaced"/>
</dbReference>
<dbReference type="Proteomes" id="UP000694429">
    <property type="component" value="Unplaced"/>
</dbReference>
<dbReference type="Proteomes" id="UP000694542">
    <property type="component" value="Unplaced"/>
</dbReference>
<dbReference type="Proteomes" id="UP000805418">
    <property type="component" value="Unplaced"/>
</dbReference>
<dbReference type="GO" id="GO:0005737">
    <property type="term" value="C:cytoplasm"/>
    <property type="evidence" value="ECO:0000318"/>
    <property type="project" value="GO_Central"/>
</dbReference>
<dbReference type="GO" id="GO:0005868">
    <property type="term" value="C:cytoplasmic dynein complex"/>
    <property type="evidence" value="ECO:0000250"/>
    <property type="project" value="UniProtKB"/>
</dbReference>
<dbReference type="GO" id="GO:0000776">
    <property type="term" value="C:kinetochore"/>
    <property type="evidence" value="ECO:0007669"/>
    <property type="project" value="UniProtKB-KW"/>
</dbReference>
<dbReference type="GO" id="GO:0005874">
    <property type="term" value="C:microtubule"/>
    <property type="evidence" value="ECO:0007669"/>
    <property type="project" value="UniProtKB-KW"/>
</dbReference>
<dbReference type="GO" id="GO:0005634">
    <property type="term" value="C:nucleus"/>
    <property type="evidence" value="ECO:0007669"/>
    <property type="project" value="UniProtKB-SubCell"/>
</dbReference>
<dbReference type="GO" id="GO:0045505">
    <property type="term" value="F:dynein intermediate chain binding"/>
    <property type="evidence" value="ECO:0000318"/>
    <property type="project" value="GO_Central"/>
</dbReference>
<dbReference type="GO" id="GO:0051301">
    <property type="term" value="P:cell division"/>
    <property type="evidence" value="ECO:0007669"/>
    <property type="project" value="UniProtKB-KW"/>
</dbReference>
<dbReference type="GO" id="GO:0007018">
    <property type="term" value="P:microtubule-based movement"/>
    <property type="evidence" value="ECO:0000318"/>
    <property type="project" value="GO_Central"/>
</dbReference>
<dbReference type="GO" id="GO:0007346">
    <property type="term" value="P:regulation of mitotic cell cycle"/>
    <property type="evidence" value="ECO:0000250"/>
    <property type="project" value="UniProtKB"/>
</dbReference>
<dbReference type="CDD" id="cd21463">
    <property type="entry name" value="DLC-like_DYNLT3"/>
    <property type="match status" value="1"/>
</dbReference>
<dbReference type="FunFam" id="3.30.1140.40:FF:000002">
    <property type="entry name" value="Dynein light chain Tctex-type 3"/>
    <property type="match status" value="1"/>
</dbReference>
<dbReference type="Gene3D" id="3.30.1140.40">
    <property type="entry name" value="Tctex-1"/>
    <property type="match status" value="1"/>
</dbReference>
<dbReference type="InterPro" id="IPR005334">
    <property type="entry name" value="Tctex-1-like"/>
</dbReference>
<dbReference type="InterPro" id="IPR038586">
    <property type="entry name" value="Tctex-1-like_sf"/>
</dbReference>
<dbReference type="PANTHER" id="PTHR21255:SF20">
    <property type="entry name" value="DYNEIN LIGHT CHAIN TCTEX-TYPE 3"/>
    <property type="match status" value="1"/>
</dbReference>
<dbReference type="PANTHER" id="PTHR21255">
    <property type="entry name" value="T-COMPLEX-ASSOCIATED-TESTIS-EXPRESSED 1/ DYNEIN LIGHT CHAIN"/>
    <property type="match status" value="1"/>
</dbReference>
<dbReference type="Pfam" id="PF03645">
    <property type="entry name" value="Tctex-1"/>
    <property type="match status" value="1"/>
</dbReference>
<proteinExistence type="inferred from homology"/>
<gene>
    <name type="primary">DYNLT3</name>
    <name type="synonym">TCTE1L</name>
</gene>
<protein>
    <recommendedName>
        <fullName>Dynein light chain Tctex-type 3</fullName>
    </recommendedName>
    <alternativeName>
        <fullName>T-complex-associated testis-expressed 1-like</fullName>
    </alternativeName>
</protein>
<feature type="chain" id="PRO_0000195157" description="Dynein light chain Tctex-type 3">
    <location>
        <begin position="1"/>
        <end position="116"/>
    </location>
</feature>
<feature type="modified residue" description="3'-nitrotyrosine" evidence="2">
    <location>
        <position position="4"/>
    </location>
</feature>
<keyword id="KW-0131">Cell cycle</keyword>
<keyword id="KW-0132">Cell division</keyword>
<keyword id="KW-0137">Centromere</keyword>
<keyword id="KW-0158">Chromosome</keyword>
<keyword id="KW-0963">Cytoplasm</keyword>
<keyword id="KW-0206">Cytoskeleton</keyword>
<keyword id="KW-0243">Dynein</keyword>
<keyword id="KW-0995">Kinetochore</keyword>
<keyword id="KW-0493">Microtubule</keyword>
<keyword id="KW-0498">Mitosis</keyword>
<keyword id="KW-0505">Motor protein</keyword>
<keyword id="KW-0944">Nitration</keyword>
<keyword id="KW-0539">Nucleus</keyword>
<keyword id="KW-1185">Reference proteome</keyword>
<keyword id="KW-0813">Transport</keyword>
<name>DYLT3_CANLF</name>
<evidence type="ECO:0000250" key="1"/>
<evidence type="ECO:0000250" key="2">
    <source>
        <dbReference type="UniProtKB" id="P56387"/>
    </source>
</evidence>
<evidence type="ECO:0000305" key="3"/>
<comment type="function">
    <text evidence="1">Acts as one of several non-catalytic accessory components of the cytoplasmic dynein 1 complex that are thought to be involved in linking dynein to cargos and to adapter proteins that regulate dynein function. Cytoplasmic dynein 1 acts as a motor for the intracellular retrograde motility of vesicles and organelles along microtubules. Probably binds BUB3 as part of transport cargo. Required for the efficient progression through mitosis (By similarity).</text>
</comment>
<comment type="subunit">
    <text evidence="1">Homodimer. The cytoplasmic dynein 1 complex consists of two catalytic heavy chains (HCs) and a number of non-catalytic subunits presented by intermediate chains (ICs), light intermediate chains (LICs) and light chains (LCs); the composition seems to vary in respect to the IC, LIC and LC composition. The heavy chain homodimer serves as a scaffold for the probable homodimeric assembly of the respective non-catalytic subunits. The ICs and LICs bind directly to the HC dimer and the LCs assemble on the IC dimer. DYNLT1 and DYNLT3 compete for association with dynein IC (DYNC1I1 or DYNC1I2). Self-associates. Interacts with DYNC1I1 and DYNC1I2. Interacts with BUB3. Interacts with SATB1 in nucleus to form complex with matrix attachment regions (MARs) of DNA (By similarity).</text>
</comment>
<comment type="subcellular location">
    <subcellularLocation>
        <location evidence="1">Nucleus</location>
    </subcellularLocation>
    <subcellularLocation>
        <location evidence="1">Cytoplasm</location>
        <location evidence="1">Cytoskeleton</location>
    </subcellularLocation>
    <subcellularLocation>
        <location>Chromosome</location>
        <location>Centromere</location>
        <location>Kinetochore</location>
    </subcellularLocation>
</comment>
<comment type="similarity">
    <text evidence="3">Belongs to the dynein light chain Tctex-type family.</text>
</comment>